<organism>
    <name type="scientific">Potato virus X (strain CP)</name>
    <name type="common">PVX</name>
    <dbReference type="NCBI Taxonomy" id="12184"/>
    <lineage>
        <taxon>Viruses</taxon>
        <taxon>Riboviria</taxon>
        <taxon>Orthornavirae</taxon>
        <taxon>Kitrinoviricota</taxon>
        <taxon>Alsuviricetes</taxon>
        <taxon>Tymovirales</taxon>
        <taxon>Alphaflexiviridae</taxon>
        <taxon>Potexvirus</taxon>
        <taxon>Potato virus X</taxon>
    </lineage>
</organism>
<organismHost>
    <name type="scientific">Brassica campestris</name>
    <name type="common">Field mustard</name>
    <dbReference type="NCBI Taxonomy" id="3711"/>
</organismHost>
<organismHost>
    <name type="scientific">Solanum tuberosum</name>
    <name type="common">Potato</name>
    <dbReference type="NCBI Taxonomy" id="4113"/>
</organismHost>
<gene>
    <name type="ORF">ORF4</name>
</gene>
<dbReference type="EMBL" id="M31541">
    <property type="protein sequence ID" value="AAA47180.1"/>
    <property type="molecule type" value="Genomic_RNA"/>
</dbReference>
<dbReference type="EMBL" id="X55802">
    <property type="protein sequence ID" value="CAA39327.1"/>
    <property type="molecule type" value="Genomic_RNA"/>
</dbReference>
<dbReference type="PIR" id="S03197">
    <property type="entry name" value="S03197"/>
</dbReference>
<dbReference type="SMR" id="P68832"/>
<dbReference type="Proteomes" id="UP000008615">
    <property type="component" value="Genome"/>
</dbReference>
<dbReference type="GO" id="GO:0044167">
    <property type="term" value="C:host cell endoplasmic reticulum membrane"/>
    <property type="evidence" value="ECO:0007669"/>
    <property type="project" value="UniProtKB-SubCell"/>
</dbReference>
<dbReference type="GO" id="GO:0016020">
    <property type="term" value="C:membrane"/>
    <property type="evidence" value="ECO:0007669"/>
    <property type="project" value="UniProtKB-KW"/>
</dbReference>
<dbReference type="GO" id="GO:0046740">
    <property type="term" value="P:transport of virus in host, cell to cell"/>
    <property type="evidence" value="ECO:0007669"/>
    <property type="project" value="UniProtKB-KW"/>
</dbReference>
<dbReference type="InterPro" id="IPR003411">
    <property type="entry name" value="TGBp3"/>
</dbReference>
<dbReference type="Pfam" id="PF02495">
    <property type="entry name" value="TGBp3"/>
    <property type="match status" value="1"/>
</dbReference>
<keyword id="KW-1038">Host endoplasmic reticulum</keyword>
<keyword id="KW-1043">Host membrane</keyword>
<keyword id="KW-0472">Membrane</keyword>
<keyword id="KW-0812">Transmembrane</keyword>
<keyword id="KW-1133">Transmembrane helix</keyword>
<keyword id="KW-0813">Transport</keyword>
<keyword id="KW-0916">Viral movement protein</keyword>
<evidence type="ECO:0000250" key="1"/>
<evidence type="ECO:0000255" key="2"/>
<evidence type="ECO:0000305" key="3"/>
<sequence length="70" mass="7596">MEAGAYLNAIIFVLVATIIAVISRGLTRTEPCTIRITGESITVHACHIDSETIKALANLKPLSLERLSFQ</sequence>
<feature type="chain" id="PRO_0000222608" description="Movement protein TGBp3">
    <location>
        <begin position="1"/>
        <end position="70"/>
    </location>
</feature>
<feature type="topological domain" description="Lumenal" evidence="2">
    <location>
        <begin position="1"/>
        <end position="4"/>
    </location>
</feature>
<feature type="transmembrane region" description="Helical" evidence="2">
    <location>
        <begin position="5"/>
        <end position="27"/>
    </location>
</feature>
<feature type="topological domain" description="Cytoplasmic" evidence="2">
    <location>
        <begin position="28"/>
        <end position="70"/>
    </location>
</feature>
<comment type="function">
    <text evidence="1">Plays a role in viral cell-to-cell propagation, by facilitating genome transport to neighboring plant cells through plasmosdesmata. May induce the formation of granular vesicles derived from the Endoplasmic reticulum, which align on actin filaments (By similarity).</text>
</comment>
<comment type="subcellular location">
    <subcellularLocation>
        <location evidence="1">Host endoplasmic reticulum membrane</location>
    </subcellularLocation>
</comment>
<comment type="miscellaneous">
    <text>TGBp1, TGBp2 and TGBp3 seem to act together for cell-to-cell propagation. TGBp1 is the main movement protein that physically cross the plasmodesma with the viral genome. TGBp2 and TGBp3 would facilitate TGBp1 function.</text>
</comment>
<comment type="similarity">
    <text evidence="3">Belongs to the Tymovirales TGBp3 protein family.</text>
</comment>
<proteinExistence type="inferred from homology"/>
<reference key="1">
    <citation type="journal article" date="1990" name="Virus Res.">
        <title>Complete cDNA sequence of a South American isolate of potato virus X.</title>
        <authorList>
            <person name="Orman B.E."/>
            <person name="Celnik R.M."/>
            <person name="Mandel A.M."/>
            <person name="Torres H.N."/>
            <person name="Mentaberry A.N."/>
        </authorList>
    </citation>
    <scope>NUCLEOTIDE SEQUENCE [GENOMIC RNA]</scope>
</reference>
<reference key="2">
    <citation type="journal article" date="2005" name="Mol. Plant Microbe Interact.">
        <title>A new cell-to-cell transport model for Potexviruses.</title>
        <authorList>
            <person name="Verchot-Lubicz J."/>
        </authorList>
    </citation>
    <scope>REVIEW</scope>
</reference>
<protein>
    <recommendedName>
        <fullName>Movement protein TGBp3</fullName>
    </recommendedName>
    <alternativeName>
        <fullName>7 kDa protein</fullName>
    </alternativeName>
    <alternativeName>
        <fullName>Triple gene block 3 protein</fullName>
        <shortName>TGBp3</shortName>
    </alternativeName>
</protein>
<accession>P68832</accession>
<accession>P10467</accession>
<name>TGB3_PVXCP</name>